<organism>
    <name type="scientific">Staphylococcus aureus (strain Mu50 / ATCC 700699)</name>
    <dbReference type="NCBI Taxonomy" id="158878"/>
    <lineage>
        <taxon>Bacteria</taxon>
        <taxon>Bacillati</taxon>
        <taxon>Bacillota</taxon>
        <taxon>Bacilli</taxon>
        <taxon>Bacillales</taxon>
        <taxon>Staphylococcaceae</taxon>
        <taxon>Staphylococcus</taxon>
    </lineage>
</organism>
<keyword id="KW-1003">Cell membrane</keyword>
<keyword id="KW-0472">Membrane</keyword>
<keyword id="KW-0812">Transmembrane</keyword>
<keyword id="KW-1133">Transmembrane helix</keyword>
<proteinExistence type="inferred from homology"/>
<gene>
    <name type="primary">flp</name>
    <name type="ordered locus">SAV2441</name>
</gene>
<evidence type="ECO:0000250" key="1"/>
<evidence type="ECO:0000255" key="2"/>
<evidence type="ECO:0000305" key="3"/>
<sequence length="498" mass="56496">MTTKKLYFLSISIIILVAISIAIYITLNSNTKTRLTNDSQQQIDKIIEHDLQKGHIPGASILIVKNGKVFLNKGYGYQDVDKKVKASPTTKYEIASNTKAFTGLAILKLAQEGRLNLNDDVSKHVPHFKMNYNGQNETITIKQLLAQTSGIPSDITSEDAVTNKNNRLNDVTRAIMGDELHHKPGEEFEYSNMNYDLLGLIIQNVTKQSYTKYITNSWLKPLHMTHTSFKQTNNKSKHDAIGYELQGSTPVVSKPEFNLWDTPSAYMMTSTEDLEHWIKFQLNPPDKYKSLVQQSHKNLSSTIGEPNANAYASGWFTNNDEHLVFHSGTLDNFSSFILLNPKQNYGIVVLANLNSEYVPKLVEHLNTQIVNHKRYSTVASILNQYKDQFNIVTVLMTTLILLAFIFSAYRAWQMRHGQILLRRSKRIAVLSWLTLCLCIAIALILYALPYLILGSNNWSFVLTWLPIEIKLALITTLIALFSTLIVILLFLHTKITKT</sequence>
<dbReference type="EMBL" id="BA000017">
    <property type="protein sequence ID" value="BAB58603.1"/>
    <property type="molecule type" value="Genomic_DNA"/>
</dbReference>
<dbReference type="RefSeq" id="WP_000208563.1">
    <property type="nucleotide sequence ID" value="NC_002758.2"/>
</dbReference>
<dbReference type="SMR" id="Q99RJ0"/>
<dbReference type="MEROPS" id="S12.011"/>
<dbReference type="KEGG" id="sav:SAV2441"/>
<dbReference type="HOGENOM" id="CLU_020027_4_2_9"/>
<dbReference type="PhylomeDB" id="Q99RJ0"/>
<dbReference type="Proteomes" id="UP000002481">
    <property type="component" value="Chromosome"/>
</dbReference>
<dbReference type="GO" id="GO:0005886">
    <property type="term" value="C:plasma membrane"/>
    <property type="evidence" value="ECO:0007669"/>
    <property type="project" value="UniProtKB-SubCell"/>
</dbReference>
<dbReference type="Gene3D" id="3.40.710.10">
    <property type="entry name" value="DD-peptidase/beta-lactamase superfamily"/>
    <property type="match status" value="1"/>
</dbReference>
<dbReference type="InterPro" id="IPR050491">
    <property type="entry name" value="Bact_CellWall_Synth/Modif"/>
</dbReference>
<dbReference type="InterPro" id="IPR001466">
    <property type="entry name" value="Beta-lactam-related"/>
</dbReference>
<dbReference type="InterPro" id="IPR012338">
    <property type="entry name" value="Beta-lactam/transpept-like"/>
</dbReference>
<dbReference type="PANTHER" id="PTHR46825">
    <property type="entry name" value="D-ALANYL-D-ALANINE-CARBOXYPEPTIDASE/ENDOPEPTIDASE AMPH"/>
    <property type="match status" value="1"/>
</dbReference>
<dbReference type="PANTHER" id="PTHR46825:SF11">
    <property type="entry name" value="PENICILLIN-BINDING PROTEIN 4"/>
    <property type="match status" value="1"/>
</dbReference>
<dbReference type="Pfam" id="PF00144">
    <property type="entry name" value="Beta-lactamase"/>
    <property type="match status" value="1"/>
</dbReference>
<dbReference type="SUPFAM" id="SSF56601">
    <property type="entry name" value="beta-lactamase/transpeptidase-like"/>
    <property type="match status" value="1"/>
</dbReference>
<name>FLP_STAAM</name>
<protein>
    <recommendedName>
        <fullName>Protein flp</fullName>
    </recommendedName>
    <alternativeName>
        <fullName>FmtA-like protein</fullName>
    </alternativeName>
</protein>
<comment type="function">
    <text evidence="1">Its precise function is unknown. Has no penicillin-binding activity and is not involved in methicillin resistance (By similarity).</text>
</comment>
<comment type="subcellular location">
    <subcellularLocation>
        <location evidence="3">Cell membrane</location>
        <topology evidence="3">Multi-pass membrane protein</topology>
    </subcellularLocation>
</comment>
<comment type="miscellaneous">
    <text evidence="1">Has two of three conserved motifs typically found in penicillin-binding proteins (PBPs) and beta-lactamases, but no penicillin-binding activity has been detected.</text>
</comment>
<reference key="1">
    <citation type="journal article" date="2001" name="Lancet">
        <title>Whole genome sequencing of meticillin-resistant Staphylococcus aureus.</title>
        <authorList>
            <person name="Kuroda M."/>
            <person name="Ohta T."/>
            <person name="Uchiyama I."/>
            <person name="Baba T."/>
            <person name="Yuzawa H."/>
            <person name="Kobayashi I."/>
            <person name="Cui L."/>
            <person name="Oguchi A."/>
            <person name="Aoki K."/>
            <person name="Nagai Y."/>
            <person name="Lian J.-Q."/>
            <person name="Ito T."/>
            <person name="Kanamori M."/>
            <person name="Matsumaru H."/>
            <person name="Maruyama A."/>
            <person name="Murakami H."/>
            <person name="Hosoyama A."/>
            <person name="Mizutani-Ui Y."/>
            <person name="Takahashi N.K."/>
            <person name="Sawano T."/>
            <person name="Inoue R."/>
            <person name="Kaito C."/>
            <person name="Sekimizu K."/>
            <person name="Hirakawa H."/>
            <person name="Kuhara S."/>
            <person name="Goto S."/>
            <person name="Yabuzaki J."/>
            <person name="Kanehisa M."/>
            <person name="Yamashita A."/>
            <person name="Oshima K."/>
            <person name="Furuya K."/>
            <person name="Yoshino C."/>
            <person name="Shiba T."/>
            <person name="Hattori M."/>
            <person name="Ogasawara N."/>
            <person name="Hayashi H."/>
            <person name="Hiramatsu K."/>
        </authorList>
    </citation>
    <scope>NUCLEOTIDE SEQUENCE [LARGE SCALE GENOMIC DNA]</scope>
    <source>
        <strain>Mu50 / ATCC 700699</strain>
    </source>
</reference>
<feature type="chain" id="PRO_0000087305" description="Protein flp">
    <location>
        <begin position="1"/>
        <end position="498"/>
    </location>
</feature>
<feature type="transmembrane region" description="Helical" evidence="2">
    <location>
        <begin position="6"/>
        <end position="26"/>
    </location>
</feature>
<feature type="transmembrane region" description="Helical" evidence="2">
    <location>
        <begin position="389"/>
        <end position="409"/>
    </location>
</feature>
<feature type="transmembrane region" description="Helical" evidence="2">
    <location>
        <begin position="433"/>
        <end position="453"/>
    </location>
</feature>
<feature type="transmembrane region" description="Helical" evidence="2">
    <location>
        <begin position="471"/>
        <end position="491"/>
    </location>
</feature>
<accession>Q99RJ0</accession>